<proteinExistence type="inferred from homology"/>
<dbReference type="EC" id="4.2.1.59" evidence="1"/>
<dbReference type="EMBL" id="CP000926">
    <property type="protein sequence ID" value="ABY97065.1"/>
    <property type="molecule type" value="Genomic_DNA"/>
</dbReference>
<dbReference type="RefSeq" id="WP_003252314.1">
    <property type="nucleotide sequence ID" value="NC_010322.1"/>
</dbReference>
<dbReference type="SMR" id="B0KSB0"/>
<dbReference type="GeneID" id="93679465"/>
<dbReference type="KEGG" id="ppg:PputGB1_1157"/>
<dbReference type="eggNOG" id="COG0764">
    <property type="taxonomic scope" value="Bacteria"/>
</dbReference>
<dbReference type="HOGENOM" id="CLU_078912_1_0_6"/>
<dbReference type="Proteomes" id="UP000002157">
    <property type="component" value="Chromosome"/>
</dbReference>
<dbReference type="GO" id="GO:0005737">
    <property type="term" value="C:cytoplasm"/>
    <property type="evidence" value="ECO:0007669"/>
    <property type="project" value="UniProtKB-SubCell"/>
</dbReference>
<dbReference type="GO" id="GO:0016020">
    <property type="term" value="C:membrane"/>
    <property type="evidence" value="ECO:0007669"/>
    <property type="project" value="GOC"/>
</dbReference>
<dbReference type="GO" id="GO:0019171">
    <property type="term" value="F:(3R)-hydroxyacyl-[acyl-carrier-protein] dehydratase activity"/>
    <property type="evidence" value="ECO:0007669"/>
    <property type="project" value="UniProtKB-EC"/>
</dbReference>
<dbReference type="GO" id="GO:0006633">
    <property type="term" value="P:fatty acid biosynthetic process"/>
    <property type="evidence" value="ECO:0007669"/>
    <property type="project" value="UniProtKB-UniRule"/>
</dbReference>
<dbReference type="GO" id="GO:0009245">
    <property type="term" value="P:lipid A biosynthetic process"/>
    <property type="evidence" value="ECO:0007669"/>
    <property type="project" value="UniProtKB-UniRule"/>
</dbReference>
<dbReference type="CDD" id="cd01288">
    <property type="entry name" value="FabZ"/>
    <property type="match status" value="1"/>
</dbReference>
<dbReference type="FunFam" id="3.10.129.10:FF:000001">
    <property type="entry name" value="3-hydroxyacyl-[acyl-carrier-protein] dehydratase FabZ"/>
    <property type="match status" value="1"/>
</dbReference>
<dbReference type="Gene3D" id="3.10.129.10">
    <property type="entry name" value="Hotdog Thioesterase"/>
    <property type="match status" value="1"/>
</dbReference>
<dbReference type="HAMAP" id="MF_00406">
    <property type="entry name" value="FabZ"/>
    <property type="match status" value="1"/>
</dbReference>
<dbReference type="InterPro" id="IPR013114">
    <property type="entry name" value="FabA_FabZ"/>
</dbReference>
<dbReference type="InterPro" id="IPR010084">
    <property type="entry name" value="FabZ"/>
</dbReference>
<dbReference type="InterPro" id="IPR029069">
    <property type="entry name" value="HotDog_dom_sf"/>
</dbReference>
<dbReference type="NCBIfam" id="TIGR01750">
    <property type="entry name" value="fabZ"/>
    <property type="match status" value="1"/>
</dbReference>
<dbReference type="NCBIfam" id="NF000582">
    <property type="entry name" value="PRK00006.1"/>
    <property type="match status" value="1"/>
</dbReference>
<dbReference type="PANTHER" id="PTHR30272">
    <property type="entry name" value="3-HYDROXYACYL-[ACYL-CARRIER-PROTEIN] DEHYDRATASE"/>
    <property type="match status" value="1"/>
</dbReference>
<dbReference type="PANTHER" id="PTHR30272:SF1">
    <property type="entry name" value="3-HYDROXYACYL-[ACYL-CARRIER-PROTEIN] DEHYDRATASE"/>
    <property type="match status" value="1"/>
</dbReference>
<dbReference type="Pfam" id="PF07977">
    <property type="entry name" value="FabA"/>
    <property type="match status" value="1"/>
</dbReference>
<dbReference type="SUPFAM" id="SSF54637">
    <property type="entry name" value="Thioesterase/thiol ester dehydrase-isomerase"/>
    <property type="match status" value="1"/>
</dbReference>
<organism>
    <name type="scientific">Pseudomonas putida (strain GB-1)</name>
    <dbReference type="NCBI Taxonomy" id="76869"/>
    <lineage>
        <taxon>Bacteria</taxon>
        <taxon>Pseudomonadati</taxon>
        <taxon>Pseudomonadota</taxon>
        <taxon>Gammaproteobacteria</taxon>
        <taxon>Pseudomonadales</taxon>
        <taxon>Pseudomonadaceae</taxon>
        <taxon>Pseudomonas</taxon>
    </lineage>
</organism>
<reference key="1">
    <citation type="submission" date="2008-01" db="EMBL/GenBank/DDBJ databases">
        <title>Complete sequence of Pseudomonas putida GB-1.</title>
        <authorList>
            <consortium name="US DOE Joint Genome Institute"/>
            <person name="Copeland A."/>
            <person name="Lucas S."/>
            <person name="Lapidus A."/>
            <person name="Barry K."/>
            <person name="Glavina del Rio T."/>
            <person name="Dalin E."/>
            <person name="Tice H."/>
            <person name="Pitluck S."/>
            <person name="Bruce D."/>
            <person name="Goodwin L."/>
            <person name="Chertkov O."/>
            <person name="Brettin T."/>
            <person name="Detter J.C."/>
            <person name="Han C."/>
            <person name="Kuske C.R."/>
            <person name="Schmutz J."/>
            <person name="Larimer F."/>
            <person name="Land M."/>
            <person name="Hauser L."/>
            <person name="Kyrpides N."/>
            <person name="Kim E."/>
            <person name="McCarthy J.K."/>
            <person name="Richardson P."/>
        </authorList>
    </citation>
    <scope>NUCLEOTIDE SEQUENCE [LARGE SCALE GENOMIC DNA]</scope>
    <source>
        <strain>GB-1</strain>
    </source>
</reference>
<gene>
    <name evidence="1" type="primary">fabZ</name>
    <name type="ordered locus">PputGB1_1157</name>
</gene>
<sequence length="146" mass="16583">MMDINEIREYLPHRYPFLLVDRVTDLDFEAQSIRAYKNVSINEPFFNGHFPAHPIMPGVLIIEAMAQAAGILGFKMLDAKPADGTLYYFVGSDKLRFRQPVLPGDQLVLEAKFLSRKSMIWKFECRALVDGKPVCSAEITCAERSL</sequence>
<accession>B0KSB0</accession>
<protein>
    <recommendedName>
        <fullName evidence="1">3-hydroxyacyl-[acyl-carrier-protein] dehydratase FabZ</fullName>
        <ecNumber evidence="1">4.2.1.59</ecNumber>
    </recommendedName>
    <alternativeName>
        <fullName evidence="1">(3R)-hydroxymyristoyl-[acyl-carrier-protein] dehydratase</fullName>
        <shortName evidence="1">(3R)-hydroxymyristoyl-ACP dehydrase</shortName>
    </alternativeName>
    <alternativeName>
        <fullName evidence="1">Beta-hydroxyacyl-ACP dehydratase</fullName>
    </alternativeName>
</protein>
<feature type="chain" id="PRO_1000080443" description="3-hydroxyacyl-[acyl-carrier-protein] dehydratase FabZ">
    <location>
        <begin position="1"/>
        <end position="146"/>
    </location>
</feature>
<feature type="active site" evidence="1">
    <location>
        <position position="49"/>
    </location>
</feature>
<comment type="function">
    <text evidence="1">Involved in unsaturated fatty acids biosynthesis. Catalyzes the dehydration of short chain beta-hydroxyacyl-ACPs and long chain saturated and unsaturated beta-hydroxyacyl-ACPs.</text>
</comment>
<comment type="catalytic activity">
    <reaction evidence="1">
        <text>a (3R)-hydroxyacyl-[ACP] = a (2E)-enoyl-[ACP] + H2O</text>
        <dbReference type="Rhea" id="RHEA:13097"/>
        <dbReference type="Rhea" id="RHEA-COMP:9925"/>
        <dbReference type="Rhea" id="RHEA-COMP:9945"/>
        <dbReference type="ChEBI" id="CHEBI:15377"/>
        <dbReference type="ChEBI" id="CHEBI:78784"/>
        <dbReference type="ChEBI" id="CHEBI:78827"/>
        <dbReference type="EC" id="4.2.1.59"/>
    </reaction>
</comment>
<comment type="subcellular location">
    <subcellularLocation>
        <location evidence="1">Cytoplasm</location>
    </subcellularLocation>
</comment>
<comment type="similarity">
    <text evidence="1">Belongs to the thioester dehydratase family. FabZ subfamily.</text>
</comment>
<name>FABZ_PSEPG</name>
<keyword id="KW-0963">Cytoplasm</keyword>
<keyword id="KW-0441">Lipid A biosynthesis</keyword>
<keyword id="KW-0444">Lipid biosynthesis</keyword>
<keyword id="KW-0443">Lipid metabolism</keyword>
<keyword id="KW-0456">Lyase</keyword>
<evidence type="ECO:0000255" key="1">
    <source>
        <dbReference type="HAMAP-Rule" id="MF_00406"/>
    </source>
</evidence>